<gene>
    <name evidence="5" type="primary">TPS-Lin-1</name>
</gene>
<feature type="transit peptide" description="Chloroplast" evidence="3">
    <location>
        <begin position="1"/>
        <end position="21"/>
    </location>
</feature>
<feature type="chain" id="PRO_0000454413" description="(R)-linalool synthase 1, chloroplastic">
    <location>
        <begin position="22"/>
        <end position="627"/>
    </location>
</feature>
<feature type="short sequence motif" description="DDXXD motif" evidence="1">
    <location>
        <begin position="378"/>
        <end position="382"/>
    </location>
</feature>
<feature type="binding site" evidence="2">
    <location>
        <position position="378"/>
    </location>
    <ligand>
        <name>Mg(2+)</name>
        <dbReference type="ChEBI" id="CHEBI:18420"/>
        <label>1</label>
    </ligand>
</feature>
<feature type="binding site" evidence="2">
    <location>
        <position position="378"/>
    </location>
    <ligand>
        <name>Mg(2+)</name>
        <dbReference type="ChEBI" id="CHEBI:18420"/>
        <label>2</label>
    </ligand>
</feature>
<feature type="binding site" evidence="2">
    <location>
        <position position="382"/>
    </location>
    <ligand>
        <name>Mg(2+)</name>
        <dbReference type="ChEBI" id="CHEBI:18420"/>
        <label>1</label>
    </ligand>
</feature>
<feature type="binding site" evidence="2">
    <location>
        <position position="382"/>
    </location>
    <ligand>
        <name>Mg(2+)</name>
        <dbReference type="ChEBI" id="CHEBI:18420"/>
        <label>2</label>
    </ligand>
</feature>
<feature type="binding site" evidence="2">
    <location>
        <position position="530"/>
    </location>
    <ligand>
        <name>Mg(2+)</name>
        <dbReference type="ChEBI" id="CHEBI:18420"/>
        <label>3</label>
    </ligand>
</feature>
<evidence type="ECO:0000250" key="1">
    <source>
        <dbReference type="UniProtKB" id="A0A1C9J6A7"/>
    </source>
</evidence>
<evidence type="ECO:0000250" key="2">
    <source>
        <dbReference type="UniProtKB" id="Q40577"/>
    </source>
</evidence>
<evidence type="ECO:0000255" key="3"/>
<evidence type="ECO:0000269" key="4">
    <source>
    </source>
</evidence>
<evidence type="ECO:0000303" key="5">
    <source>
    </source>
</evidence>
<evidence type="ECO:0000305" key="6"/>
<dbReference type="EC" id="4.2.3.26" evidence="4"/>
<dbReference type="EMBL" id="HQ426164">
    <property type="protein sequence ID" value="ADZ45501.1"/>
    <property type="molecule type" value="mRNA"/>
</dbReference>
<dbReference type="SMR" id="F2XFA6"/>
<dbReference type="UniPathway" id="UPA00924"/>
<dbReference type="GO" id="GO:0009507">
    <property type="term" value="C:chloroplast"/>
    <property type="evidence" value="ECO:0007669"/>
    <property type="project" value="UniProtKB-SubCell"/>
</dbReference>
<dbReference type="GO" id="GO:0016829">
    <property type="term" value="F:lyase activity"/>
    <property type="evidence" value="ECO:0000314"/>
    <property type="project" value="UniProtKB"/>
</dbReference>
<dbReference type="GO" id="GO:0000287">
    <property type="term" value="F:magnesium ion binding"/>
    <property type="evidence" value="ECO:0007669"/>
    <property type="project" value="InterPro"/>
</dbReference>
<dbReference type="GO" id="GO:0034008">
    <property type="term" value="F:R-linalool synthase activity"/>
    <property type="evidence" value="ECO:0000314"/>
    <property type="project" value="UniProtKB"/>
</dbReference>
<dbReference type="GO" id="GO:0010333">
    <property type="term" value="F:terpene synthase activity"/>
    <property type="evidence" value="ECO:0007669"/>
    <property type="project" value="InterPro"/>
</dbReference>
<dbReference type="GO" id="GO:0016102">
    <property type="term" value="P:diterpenoid biosynthetic process"/>
    <property type="evidence" value="ECO:0007669"/>
    <property type="project" value="InterPro"/>
</dbReference>
<dbReference type="GO" id="GO:0010597">
    <property type="term" value="P:green leaf volatile biosynthetic process"/>
    <property type="evidence" value="ECO:0000314"/>
    <property type="project" value="UniProtKB"/>
</dbReference>
<dbReference type="GO" id="GO:0016099">
    <property type="term" value="P:monoterpenoid biosynthetic process"/>
    <property type="evidence" value="ECO:0000314"/>
    <property type="project" value="UniProtKB"/>
</dbReference>
<dbReference type="CDD" id="cd00684">
    <property type="entry name" value="Terpene_cyclase_plant_C1"/>
    <property type="match status" value="1"/>
</dbReference>
<dbReference type="FunFam" id="1.50.10.130:FF:000004">
    <property type="entry name" value="Carene synthase, chloroplastic"/>
    <property type="match status" value="1"/>
</dbReference>
<dbReference type="FunFam" id="1.10.600.10:FF:000005">
    <property type="entry name" value="Ent-kaur-16-ene synthase, chloroplastic"/>
    <property type="match status" value="1"/>
</dbReference>
<dbReference type="Gene3D" id="1.10.600.10">
    <property type="entry name" value="Farnesyl Diphosphate Synthase"/>
    <property type="match status" value="1"/>
</dbReference>
<dbReference type="Gene3D" id="1.50.10.130">
    <property type="entry name" value="Terpene synthase, N-terminal domain"/>
    <property type="match status" value="1"/>
</dbReference>
<dbReference type="InterPro" id="IPR008949">
    <property type="entry name" value="Isoprenoid_synthase_dom_sf"/>
</dbReference>
<dbReference type="InterPro" id="IPR034741">
    <property type="entry name" value="Terpene_cyclase-like_1_C"/>
</dbReference>
<dbReference type="InterPro" id="IPR044814">
    <property type="entry name" value="Terpene_cyclase_plant_C1"/>
</dbReference>
<dbReference type="InterPro" id="IPR001906">
    <property type="entry name" value="Terpene_synth_N"/>
</dbReference>
<dbReference type="InterPro" id="IPR036965">
    <property type="entry name" value="Terpene_synth_N_sf"/>
</dbReference>
<dbReference type="InterPro" id="IPR050148">
    <property type="entry name" value="Terpene_synthase-like"/>
</dbReference>
<dbReference type="InterPro" id="IPR005630">
    <property type="entry name" value="Terpene_synthase_metal-bd"/>
</dbReference>
<dbReference type="InterPro" id="IPR008930">
    <property type="entry name" value="Terpenoid_cyclase/PrenylTrfase"/>
</dbReference>
<dbReference type="PANTHER" id="PTHR31739:SF25">
    <property type="entry name" value="(E,E)-GERANYLLINALOOL SYNTHASE"/>
    <property type="match status" value="1"/>
</dbReference>
<dbReference type="PANTHER" id="PTHR31739">
    <property type="entry name" value="ENT-COPALYL DIPHOSPHATE SYNTHASE, CHLOROPLASTIC"/>
    <property type="match status" value="1"/>
</dbReference>
<dbReference type="Pfam" id="PF01397">
    <property type="entry name" value="Terpene_synth"/>
    <property type="match status" value="1"/>
</dbReference>
<dbReference type="Pfam" id="PF03936">
    <property type="entry name" value="Terpene_synth_C"/>
    <property type="match status" value="1"/>
</dbReference>
<dbReference type="SFLD" id="SFLDS00005">
    <property type="entry name" value="Isoprenoid_Synthase_Type_I"/>
    <property type="match status" value="1"/>
</dbReference>
<dbReference type="SFLD" id="SFLDG01019">
    <property type="entry name" value="Terpene_Cyclase_Like_1_C_Termi"/>
    <property type="match status" value="1"/>
</dbReference>
<dbReference type="SFLD" id="SFLDG01014">
    <property type="entry name" value="Terpene_Cyclase_Like_1_N-term"/>
    <property type="match status" value="1"/>
</dbReference>
<dbReference type="SUPFAM" id="SSF48239">
    <property type="entry name" value="Terpenoid cyclases/Protein prenyltransferases"/>
    <property type="match status" value="1"/>
</dbReference>
<dbReference type="SUPFAM" id="SSF48576">
    <property type="entry name" value="Terpenoid synthases"/>
    <property type="match status" value="1"/>
</dbReference>
<name>LLOS1_PICSI</name>
<organism>
    <name type="scientific">Picea sitchensis</name>
    <name type="common">Sitka spruce</name>
    <name type="synonym">Pinus sitchensis</name>
    <dbReference type="NCBI Taxonomy" id="3332"/>
    <lineage>
        <taxon>Eukaryota</taxon>
        <taxon>Viridiplantae</taxon>
        <taxon>Streptophyta</taxon>
        <taxon>Embryophyta</taxon>
        <taxon>Tracheophyta</taxon>
        <taxon>Spermatophyta</taxon>
        <taxon>Pinopsida</taxon>
        <taxon>Pinidae</taxon>
        <taxon>Conifers I</taxon>
        <taxon>Pinales</taxon>
        <taxon>Pinaceae</taxon>
        <taxon>Picea</taxon>
    </lineage>
</organism>
<reference key="1">
    <citation type="journal article" date="2011" name="BMC Plant Biol.">
        <title>Transcriptome mining, functional characterization, and phylogeny of a large terpene synthase gene family in spruce (Picea spp.).</title>
        <authorList>
            <person name="Keeling C.I."/>
            <person name="Weisshaar S."/>
            <person name="Ralph S.G."/>
            <person name="Jancsik S."/>
            <person name="Hamberger B."/>
            <person name="Dullat H.K."/>
            <person name="Bohlmann J."/>
        </authorList>
    </citation>
    <scope>NUCLEOTIDE SEQUENCE [MRNA]</scope>
    <scope>CATALYTIC ACTIVITY</scope>
    <scope>FUNCTION</scope>
    <scope>PATHWAY</scope>
    <scope>GENE FAMILY</scope>
    <source>
        <strain>cv. FB3-425</strain>
    </source>
</reference>
<sequence>MAFVSIAPLASRCCVHKSFVSSREVKPLCRTIPTLGRCRRGKTVTPSISMCWTATVLDDGVQRRIANHHSNLWHDSFIQSLSTPYGETSYLERADKLIGEVKEIINSISVEDGELITPLNDLIQRLSIVDNIERLGIDRHFKNEIKSVLDYVYSYWNEKGIGCGRESVITDLNSTALGLRTLRLHGYPVSSDVLEQFKDQNGQFACSAIQTEGEIKSVLNLFRASLIAFPGEKVMEDAEIFSTIYLKEALLTIPVCSLSREIAYVLEHGWHTNLPRLEARNYIDVFGQDPIYGTPNIKMTQKLLEIAKLEFNIFHSLQQKELKHLSRWWKDSVFSQLTFPRHRHVEYYTLASCIDIDPQHSSFRLGFAKISHLGTVLDDIYDTFGTMDELELFTAALKRWHPSATKWLPEYMKGVYMMLYETVNEMAREADKSQGRDTLNYARQAWEAYIDSYMKEAKWISSGFLPTFEEYLDNGKVSFGYRIGTLQPILTLGTPFPHHILQEIDFPSSLNRLACSILRLKGDIHTYQAERSRGEKSSCISCYMKDNPGSTEEDAVTYINAMVNKSLKELNWEFLRPDSNAPITSKKHAFDILRAFYHLYKHRDGFSVARNEIRNLVKTTVIEPVPL</sequence>
<accession>F2XFA6</accession>
<keyword id="KW-0150">Chloroplast</keyword>
<keyword id="KW-0456">Lyase</keyword>
<keyword id="KW-0460">Magnesium</keyword>
<keyword id="KW-0479">Metal-binding</keyword>
<keyword id="KW-0934">Plastid</keyword>
<keyword id="KW-0809">Transit peptide</keyword>
<comment type="function">
    <text evidence="4">Terpene synthase (TPS) involved in the biosynthesis of monoterpene natural products included in conifer oleoresin secretions and volatile emissions; these compounds contribute to biotic and abiotic stress defense against herbivores and pathogens (PubMed:21385377). Catalyzes the conversion of (2E)-geranyl diphosphate (GPP) to (R)-linalool (PubMed:21385377).</text>
</comment>
<comment type="catalytic activity">
    <reaction evidence="4">
        <text>(2E)-geranyl diphosphate + H2O = (R)-linalool + diphosphate</text>
        <dbReference type="Rhea" id="RHEA:15809"/>
        <dbReference type="ChEBI" id="CHEBI:28"/>
        <dbReference type="ChEBI" id="CHEBI:15377"/>
        <dbReference type="ChEBI" id="CHEBI:33019"/>
        <dbReference type="ChEBI" id="CHEBI:58057"/>
        <dbReference type="EC" id="4.2.3.26"/>
    </reaction>
</comment>
<comment type="cofactor">
    <cofactor evidence="1">
        <name>Mg(2+)</name>
        <dbReference type="ChEBI" id="CHEBI:18420"/>
    </cofactor>
    <cofactor evidence="1">
        <name>Mn(2+)</name>
        <dbReference type="ChEBI" id="CHEBI:29035"/>
    </cofactor>
    <text evidence="1">Binds 3 Mg(2+) or Mn(2+) ions per subunit.</text>
</comment>
<comment type="pathway">
    <text evidence="4">Terpene metabolism; oleoresin biosynthesis.</text>
</comment>
<comment type="subcellular location">
    <subcellularLocation>
        <location evidence="3">Plastid</location>
        <location evidence="3">Chloroplast</location>
    </subcellularLocation>
</comment>
<comment type="domain">
    <text evidence="1">The Asp-Asp-Xaa-Xaa-Asp/Glu (DDXXD/E) motif is important for the catalytic activity, presumably through binding to Mg(2+).</text>
</comment>
<comment type="similarity">
    <text evidence="6">Belongs to the terpene synthase family. Tpsd subfamily.</text>
</comment>
<protein>
    <recommendedName>
        <fullName evidence="5">(R)-linalool synthase 1, chloroplastic</fullName>
        <ecNumber evidence="4">4.2.3.26</ecNumber>
    </recommendedName>
    <alternativeName>
        <fullName evidence="5">Terpene synthase TPS-Lin 1</fullName>
        <shortName evidence="5">PsTPS-Lin-1</shortName>
    </alternativeName>
</protein>
<proteinExistence type="evidence at protein level"/>